<evidence type="ECO:0000250" key="1">
    <source>
        <dbReference type="UniProtKB" id="Q9Y7D0"/>
    </source>
</evidence>
<evidence type="ECO:0000255" key="2"/>
<evidence type="ECO:0000269" key="3">
    <source>
    </source>
</evidence>
<evidence type="ECO:0000303" key="4">
    <source>
    </source>
</evidence>
<evidence type="ECO:0000305" key="5"/>
<evidence type="ECO:0000305" key="6">
    <source>
    </source>
</evidence>
<name>ICCB_TALVA</name>
<organism>
    <name type="scientific">Talaromyces variabilis</name>
    <name type="common">Penicillium variabile</name>
    <dbReference type="NCBI Taxonomy" id="28576"/>
    <lineage>
        <taxon>Eukaryota</taxon>
        <taxon>Fungi</taxon>
        <taxon>Dikarya</taxon>
        <taxon>Ascomycota</taxon>
        <taxon>Pezizomycotina</taxon>
        <taxon>Eurotiomycetes</taxon>
        <taxon>Eurotiomycetidae</taxon>
        <taxon>Eurotiales</taxon>
        <taxon>Trichocomaceae</taxon>
        <taxon>Talaromyces</taxon>
    </lineage>
</organism>
<proteinExistence type="evidence at protein level"/>
<sequence length="375" mass="39426">MDATLPSIHTALKILGPNNVSVSENTALPVIQPLDILVRVACISINHVDAKSADMSPSPGATSGTDFSGVVVAIGSDVPKESFRSTNGMKPVQIGDRVFGGVFGNNPLRRDNGAFAEYVAVPARLVWHIPGGMDFSTASTLGAAVATVGLSLFQYMQLPMPTTTSTASPDNGPFVLVYGGGTATGAMAIQVLKIAGFRPITTCSSASAGHATELGATATFDYRSPTCGAELREHTGDTLTLALDCITDTASMNICYEALGSSGGRYVALDSFPLRAHTRRSVVPDWVCTYSQFGHPIAWAAPYNLEARPEDLLTAEAWYVVAQKLIDQGLITPHPKEERLGGLAAIGEGMEAVRRGQIKGKKLVYPISNELCAAA</sequence>
<feature type="chain" id="PRO_0000449007" description="Trans-enoyl reductase iccB">
    <location>
        <begin position="1"/>
        <end position="375"/>
    </location>
</feature>
<feature type="binding site" evidence="1">
    <location>
        <begin position="48"/>
        <end position="51"/>
    </location>
    <ligand>
        <name>NADP(+)</name>
        <dbReference type="ChEBI" id="CHEBI:58349"/>
    </ligand>
</feature>
<feature type="binding site" evidence="2">
    <location>
        <begin position="143"/>
        <end position="150"/>
    </location>
    <ligand>
        <name>substrate</name>
    </ligand>
</feature>
<feature type="binding site" evidence="1">
    <location>
        <begin position="204"/>
        <end position="207"/>
    </location>
    <ligand>
        <name>NADP(+)</name>
        <dbReference type="ChEBI" id="CHEBI:58349"/>
    </ligand>
</feature>
<feature type="binding site" evidence="1">
    <location>
        <position position="222"/>
    </location>
    <ligand>
        <name>NADP(+)</name>
        <dbReference type="ChEBI" id="CHEBI:58349"/>
    </ligand>
</feature>
<feature type="binding site" evidence="1">
    <location>
        <begin position="269"/>
        <end position="270"/>
    </location>
    <ligand>
        <name>NADP(+)</name>
        <dbReference type="ChEBI" id="CHEBI:58349"/>
    </ligand>
</feature>
<feature type="binding site" evidence="2">
    <location>
        <begin position="289"/>
        <end position="293"/>
    </location>
    <ligand>
        <name>substrate</name>
    </ligand>
</feature>
<feature type="binding site" evidence="1">
    <location>
        <begin position="358"/>
        <end position="359"/>
    </location>
    <ligand>
        <name>NADP(+)</name>
        <dbReference type="ChEBI" id="CHEBI:58349"/>
    </ligand>
</feature>
<gene>
    <name evidence="4" type="primary">iccB</name>
</gene>
<protein>
    <recommendedName>
        <fullName evidence="4">Trans-enoyl reductase iccB</fullName>
        <ecNumber evidence="3">1.-.-.-</ecNumber>
    </recommendedName>
    <alternativeName>
        <fullName evidence="4">Ilicicolin H biosynthesis cluster protein B</fullName>
    </alternativeName>
</protein>
<dbReference type="EC" id="1.-.-.-" evidence="3"/>
<dbReference type="EMBL" id="MK539848">
    <property type="protein sequence ID" value="QBQ83710.1"/>
    <property type="molecule type" value="Genomic_DNA"/>
</dbReference>
<dbReference type="SMR" id="A0A482N9T9"/>
<dbReference type="GO" id="GO:0000166">
    <property type="term" value="F:nucleotide binding"/>
    <property type="evidence" value="ECO:0007669"/>
    <property type="project" value="UniProtKB-KW"/>
</dbReference>
<dbReference type="GO" id="GO:0016651">
    <property type="term" value="F:oxidoreductase activity, acting on NAD(P)H"/>
    <property type="evidence" value="ECO:0007669"/>
    <property type="project" value="InterPro"/>
</dbReference>
<dbReference type="GO" id="GO:0016218">
    <property type="term" value="F:polyketide synthase activity"/>
    <property type="evidence" value="ECO:0000314"/>
    <property type="project" value="UniProt"/>
</dbReference>
<dbReference type="GO" id="GO:0140781">
    <property type="term" value="P:ilicicolin H biosynthetic process"/>
    <property type="evidence" value="ECO:0000314"/>
    <property type="project" value="GO_Central"/>
</dbReference>
<dbReference type="CDD" id="cd08249">
    <property type="entry name" value="enoyl_reductase_like"/>
    <property type="match status" value="1"/>
</dbReference>
<dbReference type="Gene3D" id="3.90.180.10">
    <property type="entry name" value="Medium-chain alcohol dehydrogenases, catalytic domain"/>
    <property type="match status" value="1"/>
</dbReference>
<dbReference type="Gene3D" id="3.40.50.720">
    <property type="entry name" value="NAD(P)-binding Rossmann-like Domain"/>
    <property type="match status" value="1"/>
</dbReference>
<dbReference type="InterPro" id="IPR013149">
    <property type="entry name" value="ADH-like_C"/>
</dbReference>
<dbReference type="InterPro" id="IPR013154">
    <property type="entry name" value="ADH-like_N"/>
</dbReference>
<dbReference type="InterPro" id="IPR011032">
    <property type="entry name" value="GroES-like_sf"/>
</dbReference>
<dbReference type="InterPro" id="IPR036291">
    <property type="entry name" value="NAD(P)-bd_dom_sf"/>
</dbReference>
<dbReference type="InterPro" id="IPR020843">
    <property type="entry name" value="PKS_ER"/>
</dbReference>
<dbReference type="InterPro" id="IPR047122">
    <property type="entry name" value="Trans-enoyl_RdTase-like"/>
</dbReference>
<dbReference type="PANTHER" id="PTHR45348">
    <property type="entry name" value="HYPOTHETICAL OXIDOREDUCTASE (EUROFUNG)"/>
    <property type="match status" value="1"/>
</dbReference>
<dbReference type="PANTHER" id="PTHR45348:SF6">
    <property type="entry name" value="TRANS-ENOYL REDUCTASE APDC"/>
    <property type="match status" value="1"/>
</dbReference>
<dbReference type="Pfam" id="PF08240">
    <property type="entry name" value="ADH_N"/>
    <property type="match status" value="1"/>
</dbReference>
<dbReference type="Pfam" id="PF00107">
    <property type="entry name" value="ADH_zinc_N"/>
    <property type="match status" value="1"/>
</dbReference>
<dbReference type="SMART" id="SM00829">
    <property type="entry name" value="PKS_ER"/>
    <property type="match status" value="1"/>
</dbReference>
<dbReference type="SUPFAM" id="SSF50129">
    <property type="entry name" value="GroES-like"/>
    <property type="match status" value="1"/>
</dbReference>
<dbReference type="SUPFAM" id="SSF51735">
    <property type="entry name" value="NAD(P)-binding Rossmann-fold domains"/>
    <property type="match status" value="1"/>
</dbReference>
<keyword id="KW-0521">NADP</keyword>
<keyword id="KW-0547">Nucleotide-binding</keyword>
<keyword id="KW-0560">Oxidoreductase</keyword>
<accession>A0A482N9T9</accession>
<reference key="1">
    <citation type="journal article" date="2019" name="J. Am. Chem. Soc.">
        <title>Enzyme-catalyzed inverse-electron demand Diels-Alder reaction in the biosynthesis of antifungal ilicicolin H.</title>
        <authorList>
            <person name="Zhang Z."/>
            <person name="Jamieson C.S."/>
            <person name="Zhao Y.L."/>
            <person name="Li D."/>
            <person name="Ohashi M."/>
            <person name="Houk K.N."/>
            <person name="Tang Y."/>
        </authorList>
    </citation>
    <scope>NUCLEOTIDE SEQUENCE [GENOMIC DNA]</scope>
    <scope>FUNCTION</scope>
    <scope>CATALYTIC ACTIVITY</scope>
    <scope>PATHWAY</scope>
    <source>
        <strain>HXQ-H-1</strain>
    </source>
</reference>
<comment type="function">
    <text evidence="3 6">Trans-enoyl reductase; part of the gene cluster that mediates the biosynthesis of ilicicolin H, a 4-hydroxy-2-pyridonealkaloid that has potent and broad antifungal activities by inhibiting the mitochondrial respiration chain (PubMed:30905148). IccB collaborates with the hybrid PKS-NRPS synthetase iccA to assemble the backbone of ilicicolin H (PubMed:30905148). The PKS portion of iccA and trans-acting enoyl reductase iccB work together to construct an octaketide, and two methyl groups are introduced by the MT domain of iccA during the chain assembly (PubMed:30905148). The nascent chain is then condensed with tyrosine, catalyzed by the iliA C domain, and the resulting PKS-NRPS hybrid is offloaded by the iliA RED domain to form an advanced tetramic acid intermediate (PubMed:30905148). The biosynthesis of ilicicolin H starts with formation of the tetramic acid by the hybrid PKS-NRPS synthetase iccA with the partnering trans-enoyl reductase iccB since iccA lacks a designated enoylreductase (ER) domain. The cytochrome P450 monooxygenase iccC then catalyzes the ring expansion of the tetramate to the acyclic 2-pyridone. The pericyclase iccD further converts the acyclic 2-pyridone into 8-epi-ilicicolin H. Finally, the epimerase iccE converts 8-epi-ilicicolin H into ilicicolin H via epimerization. IccA to iccE are sufficient for ilicicolin H biosynthesis and the roles of the remaining enzymes, iccF, iccG and iccH within the pathway have still to be determined (Probable) (PubMed:30905148).</text>
</comment>
<comment type="catalytic activity">
    <reaction evidence="3">
        <text>N-[(4E,6E,10S,12Z,14E)-6,10-dimethyl-3-oxohexadeca-4,6,12,14-tetraenoyl]-L-tyrosyl-[ACP] = (3E,5S)-3-[(2E,4E,8S,10E,12Z)-1-hydroxy-4,8-dimethyltetradeca-2,4,10,12-tetraen-1-ylidene]-5-[(4-hydroxyphenyl)methyl]pyrrolidine-2,4-dione + holo-[ACP] + H(+)</text>
        <dbReference type="Rhea" id="RHEA:64548"/>
        <dbReference type="Rhea" id="RHEA-COMP:9685"/>
        <dbReference type="Rhea" id="RHEA-COMP:16623"/>
        <dbReference type="ChEBI" id="CHEBI:15378"/>
        <dbReference type="ChEBI" id="CHEBI:64479"/>
        <dbReference type="ChEBI" id="CHEBI:155890"/>
        <dbReference type="ChEBI" id="CHEBI:155893"/>
    </reaction>
    <physiologicalReaction direction="left-to-right" evidence="3">
        <dbReference type="Rhea" id="RHEA:64549"/>
    </physiologicalReaction>
</comment>
<comment type="pathway">
    <text evidence="3">Mycotoxin biosynthesis.</text>
</comment>
<comment type="subunit">
    <text evidence="1">Monomer.</text>
</comment>
<comment type="similarity">
    <text evidence="5">Belongs to the zinc-containing alcohol dehydrogenase family.</text>
</comment>